<proteinExistence type="inferred from homology"/>
<feature type="chain" id="PRO_0000065837" description="Protein virB3">
    <location>
        <begin position="1"/>
        <end position="108"/>
    </location>
</feature>
<feature type="transmembrane region" description="Helical" evidence="1">
    <location>
        <begin position="22"/>
        <end position="42"/>
    </location>
</feature>
<feature type="sequence conflict" description="In Ref. 1; CAA37356." evidence="2" ref="1">
    <original>V</original>
    <variation>L</variation>
    <location>
        <position position="71"/>
    </location>
</feature>
<feature type="sequence conflict" description="In Ref. 1; CAA37356." evidence="2" ref="1">
    <original>SV</original>
    <variation>TL</variation>
    <location>
        <begin position="92"/>
        <end position="93"/>
    </location>
</feature>
<sequence>MNDRLEEATLYLAATRPALFLGVPLTLAGLLVMFAGFVIVIVQNPLYEVVLVPLWFGARLVVERDYNAASVVLLFLQTAGRSVDGLIWGGASVSPNPIKVPARGRGMA</sequence>
<name>VIRB3_AGRFC</name>
<protein>
    <recommendedName>
        <fullName>Protein virB3</fullName>
    </recommendedName>
</protein>
<organism>
    <name type="scientific">Agrobacterium fabrum (strain C58 / ATCC 33970)</name>
    <name type="common">Agrobacterium tumefaciens (strain C58)</name>
    <dbReference type="NCBI Taxonomy" id="176299"/>
    <lineage>
        <taxon>Bacteria</taxon>
        <taxon>Pseudomonadati</taxon>
        <taxon>Pseudomonadota</taxon>
        <taxon>Alphaproteobacteria</taxon>
        <taxon>Hyphomicrobiales</taxon>
        <taxon>Rhizobiaceae</taxon>
        <taxon>Rhizobium/Agrobacterium group</taxon>
        <taxon>Agrobacterium</taxon>
        <taxon>Agrobacterium tumefaciens complex</taxon>
    </lineage>
</organism>
<accession>P17793</accession>
<keyword id="KW-0192">Crown gall tumor</keyword>
<keyword id="KW-0472">Membrane</keyword>
<keyword id="KW-0614">Plasmid</keyword>
<keyword id="KW-1185">Reference proteome</keyword>
<keyword id="KW-0812">Transmembrane</keyword>
<keyword id="KW-1133">Transmembrane helix</keyword>
<reference key="1">
    <citation type="journal article" date="1990" name="Mol. Gen. Genet.">
        <title>The virB operon of Agrobacterium tumefaciens pTiC58 encodes 11 open reading frames.</title>
        <authorList>
            <person name="Kuldau G.A."/>
            <person name="de Vos G."/>
            <person name="Owen J."/>
            <person name="McCaffrey G."/>
            <person name="Zambryski P."/>
        </authorList>
    </citation>
    <scope>NUCLEOTIDE SEQUENCE [GENOMIC DNA]</scope>
</reference>
<reference key="2">
    <citation type="journal article" date="1990" name="Plasmid">
        <title>Molecular characterization of the vir regulon of Agrobacterium tumefaciens: complete nucleotide sequence and gene organization of the 28.63-kbp regulon cloned as a single unit.</title>
        <authorList>
            <person name="Rogowsky P.M."/>
            <person name="Powell B.S."/>
            <person name="Shirasu K."/>
            <person name="Lin T.-S."/>
            <person name="Morel P."/>
            <person name="Zyprian E.M."/>
            <person name="Steck T.R."/>
            <person name="Kado C.I."/>
        </authorList>
    </citation>
    <scope>NUCLEOTIDE SEQUENCE [GENOMIC DNA]</scope>
</reference>
<reference key="3">
    <citation type="journal article" date="1990" name="Mol. Microbiol.">
        <title>Characterization of the virB operon of an Agrobacterium tumefaciens Ti plasmid: nucleotide sequence and protein analysis.</title>
        <authorList>
            <person name="Shirasu K."/>
            <person name="Morel P."/>
            <person name="Kado C.I."/>
        </authorList>
    </citation>
    <scope>NUCLEOTIDE SEQUENCE [GENOMIC DNA]</scope>
</reference>
<reference key="4">
    <citation type="journal article" date="2001" name="Science">
        <title>The genome of the natural genetic engineer Agrobacterium tumefaciens C58.</title>
        <authorList>
            <person name="Wood D.W."/>
            <person name="Setubal J.C."/>
            <person name="Kaul R."/>
            <person name="Monks D.E."/>
            <person name="Kitajima J.P."/>
            <person name="Okura V.K."/>
            <person name="Zhou Y."/>
            <person name="Chen L."/>
            <person name="Wood G.E."/>
            <person name="Almeida N.F. Jr."/>
            <person name="Woo L."/>
            <person name="Chen Y."/>
            <person name="Paulsen I.T."/>
            <person name="Eisen J.A."/>
            <person name="Karp P.D."/>
            <person name="Bovee D. Sr."/>
            <person name="Chapman P."/>
            <person name="Clendenning J."/>
            <person name="Deatherage G."/>
            <person name="Gillet W."/>
            <person name="Grant C."/>
            <person name="Kutyavin T."/>
            <person name="Levy R."/>
            <person name="Li M.-J."/>
            <person name="McClelland E."/>
            <person name="Palmieri A."/>
            <person name="Raymond C."/>
            <person name="Rouse G."/>
            <person name="Saenphimmachak C."/>
            <person name="Wu Z."/>
            <person name="Romero P."/>
            <person name="Gordon D."/>
            <person name="Zhang S."/>
            <person name="Yoo H."/>
            <person name="Tao Y."/>
            <person name="Biddle P."/>
            <person name="Jung M."/>
            <person name="Krespan W."/>
            <person name="Perry M."/>
            <person name="Gordon-Kamm B."/>
            <person name="Liao L."/>
            <person name="Kim S."/>
            <person name="Hendrick C."/>
            <person name="Zhao Z.-Y."/>
            <person name="Dolan M."/>
            <person name="Chumley F."/>
            <person name="Tingey S.V."/>
            <person name="Tomb J.-F."/>
            <person name="Gordon M.P."/>
            <person name="Olson M.V."/>
            <person name="Nester E.W."/>
        </authorList>
    </citation>
    <scope>NUCLEOTIDE SEQUENCE [LARGE SCALE GENOMIC DNA]</scope>
</reference>
<reference key="5">
    <citation type="journal article" date="2001" name="Science">
        <title>Genome sequence of the plant pathogen and biotechnology agent Agrobacterium tumefaciens C58.</title>
        <authorList>
            <person name="Goodner B."/>
            <person name="Hinkle G."/>
            <person name="Gattung S."/>
            <person name="Miller N."/>
            <person name="Blanchard M."/>
            <person name="Qurollo B."/>
            <person name="Goldman B.S."/>
            <person name="Cao Y."/>
            <person name="Askenazi M."/>
            <person name="Halling C."/>
            <person name="Mullin L."/>
            <person name="Houmiel K."/>
            <person name="Gordon J."/>
            <person name="Vaudin M."/>
            <person name="Iartchouk O."/>
            <person name="Epp A."/>
            <person name="Liu F."/>
            <person name="Wollam C."/>
            <person name="Allinger M."/>
            <person name="Doughty D."/>
            <person name="Scott C."/>
            <person name="Lappas C."/>
            <person name="Markelz B."/>
            <person name="Flanagan C."/>
            <person name="Crowell C."/>
            <person name="Gurson J."/>
            <person name="Lomo C."/>
            <person name="Sear C."/>
            <person name="Strub G."/>
            <person name="Cielo C."/>
            <person name="Slater S."/>
        </authorList>
    </citation>
    <scope>NUCLEOTIDE SEQUENCE [LARGE SCALE GENOMIC DNA]</scope>
    <source>
        <strain>C58 / ATCC 33970</strain>
    </source>
</reference>
<dbReference type="EMBL" id="X53264">
    <property type="protein sequence ID" value="CAA37356.1"/>
    <property type="molecule type" value="Genomic_DNA"/>
</dbReference>
<dbReference type="EMBL" id="J03320">
    <property type="protein sequence ID" value="AAA91593.1"/>
    <property type="molecule type" value="Genomic_DNA"/>
</dbReference>
<dbReference type="EMBL" id="AE007871">
    <property type="protein sequence ID" value="AAK90930.1"/>
    <property type="molecule type" value="Genomic_DNA"/>
</dbReference>
<dbReference type="PIR" id="AG3248">
    <property type="entry name" value="AG3248"/>
</dbReference>
<dbReference type="PIR" id="S12343">
    <property type="entry name" value="B3AG58"/>
</dbReference>
<dbReference type="RefSeq" id="NP_396489.1">
    <property type="nucleotide sequence ID" value="NC_003065.3"/>
</dbReference>
<dbReference type="RefSeq" id="WP_010891501.1">
    <property type="nucleotide sequence ID" value="NC_003065.3"/>
</dbReference>
<dbReference type="SMR" id="P17793"/>
<dbReference type="EnsemblBacteria" id="AAK90930">
    <property type="protein sequence ID" value="AAK90930"/>
    <property type="gene ID" value="Atu6169"/>
</dbReference>
<dbReference type="GeneID" id="86882424"/>
<dbReference type="KEGG" id="atu:Atu6169"/>
<dbReference type="PATRIC" id="fig|176299.10.peg.5365"/>
<dbReference type="HOGENOM" id="CLU_158477_1_0_5"/>
<dbReference type="OrthoDB" id="9799932at2"/>
<dbReference type="PhylomeDB" id="P17793"/>
<dbReference type="BioCyc" id="AGRO:ATU6169-MONOMER"/>
<dbReference type="Proteomes" id="UP000000813">
    <property type="component" value="Plasmid Ti"/>
</dbReference>
<dbReference type="GO" id="GO:0016020">
    <property type="term" value="C:membrane"/>
    <property type="evidence" value="ECO:0007669"/>
    <property type="project" value="UniProtKB-SubCell"/>
</dbReference>
<dbReference type="GO" id="GO:0043684">
    <property type="term" value="C:type IV secretion system complex"/>
    <property type="evidence" value="ECO:0000317"/>
    <property type="project" value="PAMGO_GAT"/>
</dbReference>
<dbReference type="GO" id="GO:0030255">
    <property type="term" value="P:protein secretion by the type IV secretion system"/>
    <property type="evidence" value="ECO:0000317"/>
    <property type="project" value="PAMGO_GAT"/>
</dbReference>
<dbReference type="InterPro" id="IPR007792">
    <property type="entry name" value="T4SS_VirB3/TrbD/AvhB"/>
</dbReference>
<dbReference type="NCBIfam" id="NF010428">
    <property type="entry name" value="PRK13854.1"/>
    <property type="match status" value="1"/>
</dbReference>
<dbReference type="Pfam" id="PF05101">
    <property type="entry name" value="VirB3"/>
    <property type="match status" value="1"/>
</dbReference>
<evidence type="ECO:0000255" key="1"/>
<evidence type="ECO:0000305" key="2"/>
<comment type="function">
    <text>VirB proteins are suggested to act at the bacterial surface and there play an important role in directing T-DNA transfer to plant cells.</text>
</comment>
<comment type="subcellular location">
    <subcellularLocation>
        <location evidence="2">Membrane</location>
        <topology evidence="2">Single-pass membrane protein</topology>
    </subcellularLocation>
</comment>
<comment type="similarity">
    <text evidence="2">Belongs to the virB3 family.</text>
</comment>
<gene>
    <name type="primary">virB3</name>
    <name type="ordered locus">Atu6169</name>
    <name type="ORF">AGR_pTi_bx137</name>
</gene>
<geneLocation type="plasmid">
    <name>pTiC58</name>
</geneLocation>